<sequence length="251" mass="27223">MLAKRIIPCLDVKDGQVVKGVKFNELKLAGDPVELAQKYDREGADELVFLDITASIEDRGTMLEVVEKTAKNVFIPFTVGGGIKTVDDMRRLLQAGADKVSINSAAVKNPELISQGSDRFGSQCIVVAIDTKKTEEGYQVFINGGTKNTGIPLMDWVKEVKYRGAGEILLTSIDHDGGKNGYDNDIINQVARVSNIPVIASGGAGTIEDFYNVFHKGQASGALAASVFHFEEISVKELKNYLSEKGVEVRL</sequence>
<reference key="1">
    <citation type="submission" date="2008-04" db="EMBL/GenBank/DDBJ databases">
        <title>Complete sequence of chromosome of Natranaerobius thermophilus JW/NM-WN-LF.</title>
        <authorList>
            <consortium name="US DOE Joint Genome Institute"/>
            <person name="Copeland A."/>
            <person name="Lucas S."/>
            <person name="Lapidus A."/>
            <person name="Glavina del Rio T."/>
            <person name="Dalin E."/>
            <person name="Tice H."/>
            <person name="Bruce D."/>
            <person name="Goodwin L."/>
            <person name="Pitluck S."/>
            <person name="Chertkov O."/>
            <person name="Brettin T."/>
            <person name="Detter J.C."/>
            <person name="Han C."/>
            <person name="Kuske C.R."/>
            <person name="Schmutz J."/>
            <person name="Larimer F."/>
            <person name="Land M."/>
            <person name="Hauser L."/>
            <person name="Kyrpides N."/>
            <person name="Lykidis A."/>
            <person name="Mesbah N.M."/>
            <person name="Wiegel J."/>
        </authorList>
    </citation>
    <scope>NUCLEOTIDE SEQUENCE [LARGE SCALE GENOMIC DNA]</scope>
    <source>
        <strain>ATCC BAA-1301 / DSM 18059 / JW/NM-WN-LF</strain>
    </source>
</reference>
<keyword id="KW-0028">Amino-acid biosynthesis</keyword>
<keyword id="KW-0963">Cytoplasm</keyword>
<keyword id="KW-0368">Histidine biosynthesis</keyword>
<keyword id="KW-0456">Lyase</keyword>
<keyword id="KW-1185">Reference proteome</keyword>
<accession>B2A6X0</accession>
<organism>
    <name type="scientific">Natranaerobius thermophilus (strain ATCC BAA-1301 / DSM 18059 / JW/NM-WN-LF)</name>
    <dbReference type="NCBI Taxonomy" id="457570"/>
    <lineage>
        <taxon>Bacteria</taxon>
        <taxon>Bacillati</taxon>
        <taxon>Bacillota</taxon>
        <taxon>Clostridia</taxon>
        <taxon>Natranaerobiales</taxon>
        <taxon>Natranaerobiaceae</taxon>
        <taxon>Natranaerobius</taxon>
    </lineage>
</organism>
<gene>
    <name evidence="1" type="primary">hisF</name>
    <name type="ordered locus">Nther_1997</name>
</gene>
<dbReference type="EC" id="4.3.2.10" evidence="1"/>
<dbReference type="EMBL" id="CP001034">
    <property type="protein sequence ID" value="ACB85564.1"/>
    <property type="molecule type" value="Genomic_DNA"/>
</dbReference>
<dbReference type="RefSeq" id="WP_012448421.1">
    <property type="nucleotide sequence ID" value="NC_010718.1"/>
</dbReference>
<dbReference type="SMR" id="B2A6X0"/>
<dbReference type="FunCoup" id="B2A6X0">
    <property type="interactions" value="405"/>
</dbReference>
<dbReference type="STRING" id="457570.Nther_1997"/>
<dbReference type="KEGG" id="nth:Nther_1997"/>
<dbReference type="eggNOG" id="COG0107">
    <property type="taxonomic scope" value="Bacteria"/>
</dbReference>
<dbReference type="HOGENOM" id="CLU_048577_4_0_9"/>
<dbReference type="InParanoid" id="B2A6X0"/>
<dbReference type="OrthoDB" id="9781903at2"/>
<dbReference type="UniPathway" id="UPA00031">
    <property type="reaction ID" value="UER00010"/>
</dbReference>
<dbReference type="Proteomes" id="UP000001683">
    <property type="component" value="Chromosome"/>
</dbReference>
<dbReference type="GO" id="GO:0005737">
    <property type="term" value="C:cytoplasm"/>
    <property type="evidence" value="ECO:0007669"/>
    <property type="project" value="UniProtKB-SubCell"/>
</dbReference>
<dbReference type="GO" id="GO:0000107">
    <property type="term" value="F:imidazoleglycerol-phosphate synthase activity"/>
    <property type="evidence" value="ECO:0007669"/>
    <property type="project" value="UniProtKB-UniRule"/>
</dbReference>
<dbReference type="GO" id="GO:0016829">
    <property type="term" value="F:lyase activity"/>
    <property type="evidence" value="ECO:0007669"/>
    <property type="project" value="UniProtKB-KW"/>
</dbReference>
<dbReference type="GO" id="GO:0000105">
    <property type="term" value="P:L-histidine biosynthetic process"/>
    <property type="evidence" value="ECO:0007669"/>
    <property type="project" value="UniProtKB-UniRule"/>
</dbReference>
<dbReference type="CDD" id="cd04731">
    <property type="entry name" value="HisF"/>
    <property type="match status" value="1"/>
</dbReference>
<dbReference type="FunFam" id="3.20.20.70:FF:000006">
    <property type="entry name" value="Imidazole glycerol phosphate synthase subunit HisF"/>
    <property type="match status" value="1"/>
</dbReference>
<dbReference type="Gene3D" id="3.20.20.70">
    <property type="entry name" value="Aldolase class I"/>
    <property type="match status" value="1"/>
</dbReference>
<dbReference type="HAMAP" id="MF_01013">
    <property type="entry name" value="HisF"/>
    <property type="match status" value="1"/>
</dbReference>
<dbReference type="InterPro" id="IPR013785">
    <property type="entry name" value="Aldolase_TIM"/>
</dbReference>
<dbReference type="InterPro" id="IPR006062">
    <property type="entry name" value="His_biosynth"/>
</dbReference>
<dbReference type="InterPro" id="IPR004651">
    <property type="entry name" value="HisF"/>
</dbReference>
<dbReference type="InterPro" id="IPR050064">
    <property type="entry name" value="IGPS_HisA/HisF"/>
</dbReference>
<dbReference type="InterPro" id="IPR011060">
    <property type="entry name" value="RibuloseP-bd_barrel"/>
</dbReference>
<dbReference type="NCBIfam" id="TIGR00735">
    <property type="entry name" value="hisF"/>
    <property type="match status" value="1"/>
</dbReference>
<dbReference type="PANTHER" id="PTHR21235:SF2">
    <property type="entry name" value="IMIDAZOLE GLYCEROL PHOSPHATE SYNTHASE HISHF"/>
    <property type="match status" value="1"/>
</dbReference>
<dbReference type="PANTHER" id="PTHR21235">
    <property type="entry name" value="IMIDAZOLE GLYCEROL PHOSPHATE SYNTHASE SUBUNIT HISF/H IGP SYNTHASE SUBUNIT HISF/H"/>
    <property type="match status" value="1"/>
</dbReference>
<dbReference type="Pfam" id="PF00977">
    <property type="entry name" value="His_biosynth"/>
    <property type="match status" value="1"/>
</dbReference>
<dbReference type="SUPFAM" id="SSF51366">
    <property type="entry name" value="Ribulose-phoshate binding barrel"/>
    <property type="match status" value="1"/>
</dbReference>
<name>HIS6_NATTJ</name>
<comment type="function">
    <text evidence="1">IGPS catalyzes the conversion of PRFAR and glutamine to IGP, AICAR and glutamate. The HisF subunit catalyzes the cyclization activity that produces IGP and AICAR from PRFAR using the ammonia provided by the HisH subunit.</text>
</comment>
<comment type="catalytic activity">
    <reaction evidence="1">
        <text>5-[(5-phospho-1-deoxy-D-ribulos-1-ylimino)methylamino]-1-(5-phospho-beta-D-ribosyl)imidazole-4-carboxamide + L-glutamine = D-erythro-1-(imidazol-4-yl)glycerol 3-phosphate + 5-amino-1-(5-phospho-beta-D-ribosyl)imidazole-4-carboxamide + L-glutamate + H(+)</text>
        <dbReference type="Rhea" id="RHEA:24793"/>
        <dbReference type="ChEBI" id="CHEBI:15378"/>
        <dbReference type="ChEBI" id="CHEBI:29985"/>
        <dbReference type="ChEBI" id="CHEBI:58278"/>
        <dbReference type="ChEBI" id="CHEBI:58359"/>
        <dbReference type="ChEBI" id="CHEBI:58475"/>
        <dbReference type="ChEBI" id="CHEBI:58525"/>
        <dbReference type="EC" id="4.3.2.10"/>
    </reaction>
</comment>
<comment type="pathway">
    <text evidence="1">Amino-acid biosynthesis; L-histidine biosynthesis; L-histidine from 5-phospho-alpha-D-ribose 1-diphosphate: step 5/9.</text>
</comment>
<comment type="subunit">
    <text evidence="1">Heterodimer of HisH and HisF.</text>
</comment>
<comment type="subcellular location">
    <subcellularLocation>
        <location evidence="1">Cytoplasm</location>
    </subcellularLocation>
</comment>
<comment type="similarity">
    <text evidence="1">Belongs to the HisA/HisF family.</text>
</comment>
<feature type="chain" id="PRO_1000190584" description="Imidazole glycerol phosphate synthase subunit HisF">
    <location>
        <begin position="1"/>
        <end position="251"/>
    </location>
</feature>
<feature type="active site" evidence="1">
    <location>
        <position position="11"/>
    </location>
</feature>
<feature type="active site" evidence="1">
    <location>
        <position position="130"/>
    </location>
</feature>
<proteinExistence type="inferred from homology"/>
<protein>
    <recommendedName>
        <fullName evidence="1">Imidazole glycerol phosphate synthase subunit HisF</fullName>
        <ecNumber evidence="1">4.3.2.10</ecNumber>
    </recommendedName>
    <alternativeName>
        <fullName evidence="1">IGP synthase cyclase subunit</fullName>
    </alternativeName>
    <alternativeName>
        <fullName evidence="1">IGP synthase subunit HisF</fullName>
    </alternativeName>
    <alternativeName>
        <fullName evidence="1">ImGP synthase subunit HisF</fullName>
        <shortName evidence="1">IGPS subunit HisF</shortName>
    </alternativeName>
</protein>
<evidence type="ECO:0000255" key="1">
    <source>
        <dbReference type="HAMAP-Rule" id="MF_01013"/>
    </source>
</evidence>